<feature type="chain" id="PRO_1000212877" description="UPF0301 protein Vapar_4617">
    <location>
        <begin position="1"/>
        <end position="199"/>
    </location>
</feature>
<comment type="similarity">
    <text evidence="1">Belongs to the UPF0301 (AlgH) family.</text>
</comment>
<evidence type="ECO:0000255" key="1">
    <source>
        <dbReference type="HAMAP-Rule" id="MF_00758"/>
    </source>
</evidence>
<name>Y4617_VARPS</name>
<dbReference type="EMBL" id="CP001635">
    <property type="protein sequence ID" value="ACS21222.1"/>
    <property type="molecule type" value="Genomic_DNA"/>
</dbReference>
<dbReference type="SMR" id="C5CL71"/>
<dbReference type="STRING" id="543728.Vapar_4617"/>
<dbReference type="KEGG" id="vap:Vapar_4617"/>
<dbReference type="eggNOG" id="COG1678">
    <property type="taxonomic scope" value="Bacteria"/>
</dbReference>
<dbReference type="HOGENOM" id="CLU_057596_1_0_4"/>
<dbReference type="OrthoDB" id="9807486at2"/>
<dbReference type="GO" id="GO:0005829">
    <property type="term" value="C:cytosol"/>
    <property type="evidence" value="ECO:0007669"/>
    <property type="project" value="TreeGrafter"/>
</dbReference>
<dbReference type="Gene3D" id="3.40.1740.10">
    <property type="entry name" value="VC0467-like"/>
    <property type="match status" value="1"/>
</dbReference>
<dbReference type="HAMAP" id="MF_00758">
    <property type="entry name" value="UPF0301"/>
    <property type="match status" value="1"/>
</dbReference>
<dbReference type="InterPro" id="IPR003774">
    <property type="entry name" value="AlgH-like"/>
</dbReference>
<dbReference type="NCBIfam" id="NF001266">
    <property type="entry name" value="PRK00228.1-1"/>
    <property type="match status" value="1"/>
</dbReference>
<dbReference type="PANTHER" id="PTHR30327">
    <property type="entry name" value="UNCHARACTERIZED PROTEIN YQGE"/>
    <property type="match status" value="1"/>
</dbReference>
<dbReference type="PANTHER" id="PTHR30327:SF1">
    <property type="entry name" value="UPF0301 PROTEIN YQGE"/>
    <property type="match status" value="1"/>
</dbReference>
<dbReference type="Pfam" id="PF02622">
    <property type="entry name" value="DUF179"/>
    <property type="match status" value="1"/>
</dbReference>
<dbReference type="SUPFAM" id="SSF143456">
    <property type="entry name" value="VC0467-like"/>
    <property type="match status" value="1"/>
</dbReference>
<proteinExistence type="inferred from homology"/>
<protein>
    <recommendedName>
        <fullName evidence="1">UPF0301 protein Vapar_4617</fullName>
    </recommendedName>
</protein>
<gene>
    <name type="ordered locus">Vapar_4617</name>
</gene>
<accession>C5CL71</accession>
<reference key="1">
    <citation type="journal article" date="2011" name="J. Bacteriol.">
        <title>Complete genome sequence of the metabolically versatile plant growth-promoting endophyte, Variovorax paradoxus S110.</title>
        <authorList>
            <person name="Han J.I."/>
            <person name="Choi H.K."/>
            <person name="Lee S.W."/>
            <person name="Orwin P.M."/>
            <person name="Kim J."/>
            <person name="Laroe S.L."/>
            <person name="Kim T.G."/>
            <person name="O'Neil J."/>
            <person name="Leadbetter J.R."/>
            <person name="Lee S.Y."/>
            <person name="Hur C.G."/>
            <person name="Spain J.C."/>
            <person name="Ovchinnikova G."/>
            <person name="Goodwin L."/>
            <person name="Han C."/>
        </authorList>
    </citation>
    <scope>NUCLEOTIDE SEQUENCE [LARGE SCALE GENOMIC DNA]</scope>
    <source>
        <strain>S110</strain>
    </source>
</reference>
<sequence>MAADSAPMNLTHHFLIAMPGMEDKTFNRSVVYLCEHSERGALGLVINKPSDINLKVLFEKIELHLSRPELGDAPVFQGGPVQTERGFVLHEPVFTHAEKPEESVYASTMTIPGGLEMTTSKDVLEALATGAGPRKVLVSLGYSAWGEGQLESELAENSWLTVGADPAVIFDTPVEQRYDRALLLLGLEAWKLSPEAGHA</sequence>
<organism>
    <name type="scientific">Variovorax paradoxus (strain S110)</name>
    <dbReference type="NCBI Taxonomy" id="543728"/>
    <lineage>
        <taxon>Bacteria</taxon>
        <taxon>Pseudomonadati</taxon>
        <taxon>Pseudomonadota</taxon>
        <taxon>Betaproteobacteria</taxon>
        <taxon>Burkholderiales</taxon>
        <taxon>Comamonadaceae</taxon>
        <taxon>Variovorax</taxon>
    </lineage>
</organism>